<name>RS16_ORYSJ</name>
<accession>Q0IQF7</accession>
<accession>B7E333</accession>
<accession>P46294</accession>
<accession>Q2QYC7</accession>
<protein>
    <recommendedName>
        <fullName evidence="1">Small ribosomal subunit protein uS9</fullName>
    </recommendedName>
    <alternativeName>
        <fullName>40S ribosomal protein S16</fullName>
    </alternativeName>
</protein>
<dbReference type="EMBL" id="DP000010">
    <property type="protein sequence ID" value="ABA91285.1"/>
    <property type="molecule type" value="Genomic_DNA"/>
</dbReference>
<dbReference type="EMBL" id="DP000011">
    <property type="protein sequence ID" value="ABA95713.1"/>
    <property type="molecule type" value="Genomic_DNA"/>
</dbReference>
<dbReference type="EMBL" id="AP008217">
    <property type="protein sequence ID" value="BAF27477.1"/>
    <property type="molecule type" value="Genomic_DNA"/>
</dbReference>
<dbReference type="EMBL" id="AP008218">
    <property type="protein sequence ID" value="BAF29058.1"/>
    <property type="molecule type" value="Genomic_DNA"/>
</dbReference>
<dbReference type="EMBL" id="AP014967">
    <property type="protein sequence ID" value="BAT12491.1"/>
    <property type="molecule type" value="Genomic_DNA"/>
</dbReference>
<dbReference type="EMBL" id="AP014968">
    <property type="protein sequence ID" value="BAT15680.1"/>
    <property type="molecule type" value="Genomic_DNA"/>
</dbReference>
<dbReference type="EMBL" id="CM000148">
    <property type="protein sequence ID" value="EAZ17271.1"/>
    <property type="molecule type" value="Genomic_DNA"/>
</dbReference>
<dbReference type="EMBL" id="AK058697">
    <property type="protein sequence ID" value="BAG86780.1"/>
    <property type="molecule type" value="mRNA"/>
</dbReference>
<dbReference type="EMBL" id="AK059550">
    <property type="protein sequence ID" value="BAG87028.1"/>
    <property type="molecule type" value="mRNA"/>
</dbReference>
<dbReference type="EMBL" id="AK121503">
    <property type="protein sequence ID" value="BAH00522.1"/>
    <property type="molecule type" value="mRNA"/>
</dbReference>
<dbReference type="SMR" id="Q0IQF7"/>
<dbReference type="FunCoup" id="Q0IQF7">
    <property type="interactions" value="1425"/>
</dbReference>
<dbReference type="STRING" id="39947.Q0IQF7"/>
<dbReference type="CarbonylDB" id="Q0IQF7"/>
<dbReference type="PaxDb" id="39947-Q0IQF7"/>
<dbReference type="EnsemblPlants" id="Os11t0127900-01">
    <property type="protein sequence ID" value="Os11t0127900-01"/>
    <property type="gene ID" value="Os11g0127900"/>
</dbReference>
<dbReference type="EnsemblPlants" id="Os12t0124200-01">
    <property type="protein sequence ID" value="Os12t0124200-01"/>
    <property type="gene ID" value="Os12g0124200"/>
</dbReference>
<dbReference type="Gramene" id="Os11t0127900-01">
    <property type="protein sequence ID" value="Os11t0127900-01"/>
    <property type="gene ID" value="Os11g0127900"/>
</dbReference>
<dbReference type="Gramene" id="Os12t0124200-01">
    <property type="protein sequence ID" value="Os12t0124200-01"/>
    <property type="gene ID" value="Os12g0124200"/>
</dbReference>
<dbReference type="KEGG" id="dosa:Os11g0127900"/>
<dbReference type="KEGG" id="dosa:Os12g0124200"/>
<dbReference type="KEGG" id="osa:4349653"/>
<dbReference type="KEGG" id="osa:4351374"/>
<dbReference type="eggNOG" id="KOG1753">
    <property type="taxonomic scope" value="Eukaryota"/>
</dbReference>
<dbReference type="HOGENOM" id="CLU_046483_4_0_1"/>
<dbReference type="InParanoid" id="Q0IQF7"/>
<dbReference type="OMA" id="WPIEMAR"/>
<dbReference type="OrthoDB" id="593926at2759"/>
<dbReference type="Proteomes" id="UP000000763">
    <property type="component" value="Chromosome 11"/>
</dbReference>
<dbReference type="Proteomes" id="UP000000763">
    <property type="component" value="Chromosome 12"/>
</dbReference>
<dbReference type="Proteomes" id="UP000007752">
    <property type="component" value="Chromosome 11"/>
</dbReference>
<dbReference type="Proteomes" id="UP000059680">
    <property type="component" value="Chromosome 11"/>
</dbReference>
<dbReference type="Proteomes" id="UP000059680">
    <property type="component" value="Chromosome 12"/>
</dbReference>
<dbReference type="GO" id="GO:0022627">
    <property type="term" value="C:cytosolic small ribosomal subunit"/>
    <property type="evidence" value="ECO:0000318"/>
    <property type="project" value="GO_Central"/>
</dbReference>
<dbReference type="GO" id="GO:0003723">
    <property type="term" value="F:RNA binding"/>
    <property type="evidence" value="ECO:0000318"/>
    <property type="project" value="GO_Central"/>
</dbReference>
<dbReference type="GO" id="GO:0003735">
    <property type="term" value="F:structural constituent of ribosome"/>
    <property type="evidence" value="ECO:0000318"/>
    <property type="project" value="GO_Central"/>
</dbReference>
<dbReference type="GO" id="GO:0000462">
    <property type="term" value="P:maturation of SSU-rRNA from tricistronic rRNA transcript (SSU-rRNA, 5.8S rRNA, LSU-rRNA)"/>
    <property type="evidence" value="ECO:0000318"/>
    <property type="project" value="GO_Central"/>
</dbReference>
<dbReference type="GO" id="GO:0006412">
    <property type="term" value="P:translation"/>
    <property type="evidence" value="ECO:0007669"/>
    <property type="project" value="InterPro"/>
</dbReference>
<dbReference type="FunFam" id="3.30.230.10:FF:000007">
    <property type="entry name" value="40S ribosomal protein S16"/>
    <property type="match status" value="1"/>
</dbReference>
<dbReference type="Gene3D" id="3.30.230.10">
    <property type="match status" value="1"/>
</dbReference>
<dbReference type="InterPro" id="IPR020568">
    <property type="entry name" value="Ribosomal_Su5_D2-typ_SF"/>
</dbReference>
<dbReference type="InterPro" id="IPR000754">
    <property type="entry name" value="Ribosomal_uS9"/>
</dbReference>
<dbReference type="InterPro" id="IPR020574">
    <property type="entry name" value="Ribosomal_uS9_CS"/>
</dbReference>
<dbReference type="InterPro" id="IPR014721">
    <property type="entry name" value="Ribsml_uS5_D2-typ_fold_subgr"/>
</dbReference>
<dbReference type="NCBIfam" id="NF001749">
    <property type="entry name" value="PRK00474.1"/>
    <property type="match status" value="1"/>
</dbReference>
<dbReference type="PANTHER" id="PTHR21569:SF16">
    <property type="entry name" value="RIBOSOMAL PROTEIN S16"/>
    <property type="match status" value="1"/>
</dbReference>
<dbReference type="PANTHER" id="PTHR21569">
    <property type="entry name" value="RIBOSOMAL PROTEIN S9"/>
    <property type="match status" value="1"/>
</dbReference>
<dbReference type="Pfam" id="PF00380">
    <property type="entry name" value="Ribosomal_S9"/>
    <property type="match status" value="1"/>
</dbReference>
<dbReference type="SUPFAM" id="SSF54211">
    <property type="entry name" value="Ribosomal protein S5 domain 2-like"/>
    <property type="match status" value="1"/>
</dbReference>
<dbReference type="PROSITE" id="PS00360">
    <property type="entry name" value="RIBOSOMAL_S9"/>
    <property type="match status" value="1"/>
</dbReference>
<keyword id="KW-0963">Cytoplasm</keyword>
<keyword id="KW-1185">Reference proteome</keyword>
<keyword id="KW-0687">Ribonucleoprotein</keyword>
<keyword id="KW-0689">Ribosomal protein</keyword>
<comment type="subcellular location">
    <subcellularLocation>
        <location>Cytoplasm</location>
    </subcellularLocation>
</comment>
<comment type="similarity">
    <text evidence="1">Belongs to the universal ribosomal protein uS9 family.</text>
</comment>
<feature type="chain" id="PRO_0000111493" description="Small ribosomal subunit protein uS9">
    <location>
        <begin position="1"/>
        <end position="149"/>
    </location>
</feature>
<reference key="1">
    <citation type="journal article" date="2005" name="BMC Biol.">
        <title>The sequence of rice chromosomes 11 and 12, rich in disease resistance genes and recent gene duplications.</title>
        <authorList>
            <consortium name="The rice chromosomes 11 and 12 sequencing consortia"/>
        </authorList>
    </citation>
    <scope>NUCLEOTIDE SEQUENCE [LARGE SCALE GENOMIC DNA]</scope>
    <source>
        <strain>cv. Nipponbare</strain>
    </source>
</reference>
<reference key="2">
    <citation type="journal article" date="2005" name="Nature">
        <title>The map-based sequence of the rice genome.</title>
        <authorList>
            <consortium name="International rice genome sequencing project (IRGSP)"/>
        </authorList>
    </citation>
    <scope>NUCLEOTIDE SEQUENCE [LARGE SCALE GENOMIC DNA]</scope>
    <source>
        <strain>cv. Nipponbare</strain>
    </source>
</reference>
<reference key="3">
    <citation type="journal article" date="2008" name="Nucleic Acids Res.">
        <title>The rice annotation project database (RAP-DB): 2008 update.</title>
        <authorList>
            <consortium name="The rice annotation project (RAP)"/>
        </authorList>
    </citation>
    <scope>GENOME REANNOTATION</scope>
    <source>
        <strain>cv. Nipponbare</strain>
    </source>
</reference>
<reference key="4">
    <citation type="journal article" date="2013" name="Rice">
        <title>Improvement of the Oryza sativa Nipponbare reference genome using next generation sequence and optical map data.</title>
        <authorList>
            <person name="Kawahara Y."/>
            <person name="de la Bastide M."/>
            <person name="Hamilton J.P."/>
            <person name="Kanamori H."/>
            <person name="McCombie W.R."/>
            <person name="Ouyang S."/>
            <person name="Schwartz D.C."/>
            <person name="Tanaka T."/>
            <person name="Wu J."/>
            <person name="Zhou S."/>
            <person name="Childs K.L."/>
            <person name="Davidson R.M."/>
            <person name="Lin H."/>
            <person name="Quesada-Ocampo L."/>
            <person name="Vaillancourt B."/>
            <person name="Sakai H."/>
            <person name="Lee S.S."/>
            <person name="Kim J."/>
            <person name="Numa H."/>
            <person name="Itoh T."/>
            <person name="Buell C.R."/>
            <person name="Matsumoto T."/>
        </authorList>
    </citation>
    <scope>GENOME REANNOTATION</scope>
    <source>
        <strain>cv. Nipponbare</strain>
    </source>
</reference>
<reference key="5">
    <citation type="journal article" date="2005" name="PLoS Biol.">
        <title>The genomes of Oryza sativa: a history of duplications.</title>
        <authorList>
            <person name="Yu J."/>
            <person name="Wang J."/>
            <person name="Lin W."/>
            <person name="Li S."/>
            <person name="Li H."/>
            <person name="Zhou J."/>
            <person name="Ni P."/>
            <person name="Dong W."/>
            <person name="Hu S."/>
            <person name="Zeng C."/>
            <person name="Zhang J."/>
            <person name="Zhang Y."/>
            <person name="Li R."/>
            <person name="Xu Z."/>
            <person name="Li S."/>
            <person name="Li X."/>
            <person name="Zheng H."/>
            <person name="Cong L."/>
            <person name="Lin L."/>
            <person name="Yin J."/>
            <person name="Geng J."/>
            <person name="Li G."/>
            <person name="Shi J."/>
            <person name="Liu J."/>
            <person name="Lv H."/>
            <person name="Li J."/>
            <person name="Wang J."/>
            <person name="Deng Y."/>
            <person name="Ran L."/>
            <person name="Shi X."/>
            <person name="Wang X."/>
            <person name="Wu Q."/>
            <person name="Li C."/>
            <person name="Ren X."/>
            <person name="Wang J."/>
            <person name="Wang X."/>
            <person name="Li D."/>
            <person name="Liu D."/>
            <person name="Zhang X."/>
            <person name="Ji Z."/>
            <person name="Zhao W."/>
            <person name="Sun Y."/>
            <person name="Zhang Z."/>
            <person name="Bao J."/>
            <person name="Han Y."/>
            <person name="Dong L."/>
            <person name="Ji J."/>
            <person name="Chen P."/>
            <person name="Wu S."/>
            <person name="Liu J."/>
            <person name="Xiao Y."/>
            <person name="Bu D."/>
            <person name="Tan J."/>
            <person name="Yang L."/>
            <person name="Ye C."/>
            <person name="Zhang J."/>
            <person name="Xu J."/>
            <person name="Zhou Y."/>
            <person name="Yu Y."/>
            <person name="Zhang B."/>
            <person name="Zhuang S."/>
            <person name="Wei H."/>
            <person name="Liu B."/>
            <person name="Lei M."/>
            <person name="Yu H."/>
            <person name="Li Y."/>
            <person name="Xu H."/>
            <person name="Wei S."/>
            <person name="He X."/>
            <person name="Fang L."/>
            <person name="Zhang Z."/>
            <person name="Zhang Y."/>
            <person name="Huang X."/>
            <person name="Su Z."/>
            <person name="Tong W."/>
            <person name="Li J."/>
            <person name="Tong Z."/>
            <person name="Li S."/>
            <person name="Ye J."/>
            <person name="Wang L."/>
            <person name="Fang L."/>
            <person name="Lei T."/>
            <person name="Chen C.-S."/>
            <person name="Chen H.-C."/>
            <person name="Xu Z."/>
            <person name="Li H."/>
            <person name="Huang H."/>
            <person name="Zhang F."/>
            <person name="Xu H."/>
            <person name="Li N."/>
            <person name="Zhao C."/>
            <person name="Li S."/>
            <person name="Dong L."/>
            <person name="Huang Y."/>
            <person name="Li L."/>
            <person name="Xi Y."/>
            <person name="Qi Q."/>
            <person name="Li W."/>
            <person name="Zhang B."/>
            <person name="Hu W."/>
            <person name="Zhang Y."/>
            <person name="Tian X."/>
            <person name="Jiao Y."/>
            <person name="Liang X."/>
            <person name="Jin J."/>
            <person name="Gao L."/>
            <person name="Zheng W."/>
            <person name="Hao B."/>
            <person name="Liu S.-M."/>
            <person name="Wang W."/>
            <person name="Yuan L."/>
            <person name="Cao M."/>
            <person name="McDermott J."/>
            <person name="Samudrala R."/>
            <person name="Wang J."/>
            <person name="Wong G.K.-S."/>
            <person name="Yang H."/>
        </authorList>
    </citation>
    <scope>NUCLEOTIDE SEQUENCE [LARGE SCALE GENOMIC DNA]</scope>
    <source>
        <strain>cv. Nipponbare</strain>
    </source>
</reference>
<reference key="6">
    <citation type="journal article" date="2003" name="Science">
        <title>Collection, mapping, and annotation of over 28,000 cDNA clones from japonica rice.</title>
        <authorList>
            <consortium name="The rice full-length cDNA consortium"/>
        </authorList>
    </citation>
    <scope>NUCLEOTIDE SEQUENCE [LARGE SCALE MRNA]</scope>
    <source>
        <strain>cv. Nipponbare</strain>
    </source>
</reference>
<organism>
    <name type="scientific">Oryza sativa subsp. japonica</name>
    <name type="common">Rice</name>
    <dbReference type="NCBI Taxonomy" id="39947"/>
    <lineage>
        <taxon>Eukaryota</taxon>
        <taxon>Viridiplantae</taxon>
        <taxon>Streptophyta</taxon>
        <taxon>Embryophyta</taxon>
        <taxon>Tracheophyta</taxon>
        <taxon>Spermatophyta</taxon>
        <taxon>Magnoliopsida</taxon>
        <taxon>Liliopsida</taxon>
        <taxon>Poales</taxon>
        <taxon>Poaceae</taxon>
        <taxon>BOP clade</taxon>
        <taxon>Oryzoideae</taxon>
        <taxon>Oryzeae</taxon>
        <taxon>Oryzinae</taxon>
        <taxon>Oryza</taxon>
        <taxon>Oryza sativa</taxon>
    </lineage>
</organism>
<sequence length="149" mass="16819">MAAALTRPPPGTVQCFGRKKTAVAVSYCKPGRGLIKVNGVPIELIRPEMLRLKAFEPILLAGRSRFKDIDMRIRVRGGGKTSQIYAIRQAIAKALVAYYQKYVDEASKKEVKDIFARYDRTLLVADPRRCEPKKFGGRGARARFQKSYR</sequence>
<proteinExistence type="evidence at transcript level"/>
<gene>
    <name type="primary">RPS16A</name>
    <name type="ordered locus">Os11g0127900</name>
    <name type="ordered locus">LOC_Os11g03400</name>
    <name type="ORF">OsJ_031480</name>
</gene>
<gene>
    <name type="primary">RPS16B</name>
    <name type="ordered locus">Os12g0124200</name>
    <name type="ordered locus">LOC_Os12g03090</name>
</gene>
<evidence type="ECO:0000305" key="1"/>